<accession>Q8P125</accession>
<name>RF1_STRP8</name>
<organism>
    <name type="scientific">Streptococcus pyogenes serotype M18 (strain MGAS8232)</name>
    <dbReference type="NCBI Taxonomy" id="186103"/>
    <lineage>
        <taxon>Bacteria</taxon>
        <taxon>Bacillati</taxon>
        <taxon>Bacillota</taxon>
        <taxon>Bacilli</taxon>
        <taxon>Lactobacillales</taxon>
        <taxon>Streptococcaceae</taxon>
        <taxon>Streptococcus</taxon>
    </lineage>
</organism>
<reference key="1">
    <citation type="journal article" date="2002" name="Proc. Natl. Acad. Sci. U.S.A.">
        <title>Genome sequence and comparative microarray analysis of serotype M18 group A Streptococcus strains associated with acute rheumatic fever outbreaks.</title>
        <authorList>
            <person name="Smoot J.C."/>
            <person name="Barbian K.D."/>
            <person name="Van Gompel J.J."/>
            <person name="Smoot L.M."/>
            <person name="Chaussee M.S."/>
            <person name="Sylva G.L."/>
            <person name="Sturdevant D.E."/>
            <person name="Ricklefs S.M."/>
            <person name="Porcella S.F."/>
            <person name="Parkins L.D."/>
            <person name="Beres S.B."/>
            <person name="Campbell D.S."/>
            <person name="Smith T.M."/>
            <person name="Zhang Q."/>
            <person name="Kapur V."/>
            <person name="Daly J.A."/>
            <person name="Veasy L.G."/>
            <person name="Musser J.M."/>
        </authorList>
    </citation>
    <scope>NUCLEOTIDE SEQUENCE [LARGE SCALE GENOMIC DNA]</scope>
    <source>
        <strain>MGAS8232</strain>
    </source>
</reference>
<evidence type="ECO:0000255" key="1">
    <source>
        <dbReference type="HAMAP-Rule" id="MF_00093"/>
    </source>
</evidence>
<proteinExistence type="inferred from homology"/>
<keyword id="KW-0963">Cytoplasm</keyword>
<keyword id="KW-0488">Methylation</keyword>
<keyword id="KW-0648">Protein biosynthesis</keyword>
<protein>
    <recommendedName>
        <fullName evidence="1">Peptide chain release factor 1</fullName>
        <shortName evidence="1">RF-1</shortName>
    </recommendedName>
</protein>
<sequence length="359" mass="40612">MNIYDQLQAVEDRYEELGELLSDPDVVSDTKRFMELSREEANTRETVTAYREYKQVIQTISDAEEMIKDASGDPELEEMAKEELKESKAAKEEYEEKLKILLLPKDPNDDKNIILEIRGAAGGDEAALFAGDLLTMYQKYAETQGWRFEVMESSVNGVGGIKEVVAMVSGQSVYSKLKYESGAHRVQRVPVTESQGRVHTSTATVLVMPEVEEVEYDIDQKDLRVDIYHASGAGGQNVNKVATAVRMVHIPTGIKVEMQEERTQQKNRDKAMKIIRARVADHFAQIAQDEQDAERKSTVGTGDRSERIRTYNFPQNRVTDHRIGLTLQKLDIILSGKMDEVIDALVMYDQTKKLESLNN</sequence>
<gene>
    <name evidence="1" type="primary">prfA</name>
    <name type="ordered locus">spyM18_1101</name>
</gene>
<feature type="chain" id="PRO_0000177757" description="Peptide chain release factor 1">
    <location>
        <begin position="1"/>
        <end position="359"/>
    </location>
</feature>
<feature type="modified residue" description="N5-methylglutamine" evidence="1">
    <location>
        <position position="236"/>
    </location>
</feature>
<comment type="function">
    <text evidence="1">Peptide chain release factor 1 directs the termination of translation in response to the peptide chain termination codons UAG and UAA.</text>
</comment>
<comment type="subcellular location">
    <subcellularLocation>
        <location evidence="1">Cytoplasm</location>
    </subcellularLocation>
</comment>
<comment type="PTM">
    <text evidence="1">Methylated by PrmC. Methylation increases the termination efficiency of RF1.</text>
</comment>
<comment type="similarity">
    <text evidence="1">Belongs to the prokaryotic/mitochondrial release factor family.</text>
</comment>
<dbReference type="EMBL" id="AE009949">
    <property type="protein sequence ID" value="AAL97723.1"/>
    <property type="molecule type" value="Genomic_DNA"/>
</dbReference>
<dbReference type="RefSeq" id="WP_011017759.1">
    <property type="nucleotide sequence ID" value="NC_003485.1"/>
</dbReference>
<dbReference type="SMR" id="Q8P125"/>
<dbReference type="KEGG" id="spm:spyM18_1101"/>
<dbReference type="HOGENOM" id="CLU_036856_0_1_9"/>
<dbReference type="GO" id="GO:0005737">
    <property type="term" value="C:cytoplasm"/>
    <property type="evidence" value="ECO:0007669"/>
    <property type="project" value="UniProtKB-SubCell"/>
</dbReference>
<dbReference type="GO" id="GO:0016149">
    <property type="term" value="F:translation release factor activity, codon specific"/>
    <property type="evidence" value="ECO:0007669"/>
    <property type="project" value="UniProtKB-UniRule"/>
</dbReference>
<dbReference type="FunFam" id="3.30.160.20:FF:000027">
    <property type="entry name" value="Peptide chain release factor 1"/>
    <property type="match status" value="1"/>
</dbReference>
<dbReference type="FunFam" id="3.30.70.1660:FF:000002">
    <property type="entry name" value="Peptide chain release factor 1"/>
    <property type="match status" value="1"/>
</dbReference>
<dbReference type="FunFam" id="3.30.70.1660:FF:000004">
    <property type="entry name" value="Peptide chain release factor 1"/>
    <property type="match status" value="1"/>
</dbReference>
<dbReference type="Gene3D" id="3.30.160.20">
    <property type="match status" value="1"/>
</dbReference>
<dbReference type="Gene3D" id="3.30.70.1660">
    <property type="match status" value="2"/>
</dbReference>
<dbReference type="Gene3D" id="6.10.140.1950">
    <property type="match status" value="1"/>
</dbReference>
<dbReference type="HAMAP" id="MF_00093">
    <property type="entry name" value="Rel_fac_1"/>
    <property type="match status" value="1"/>
</dbReference>
<dbReference type="InterPro" id="IPR005139">
    <property type="entry name" value="PCRF"/>
</dbReference>
<dbReference type="InterPro" id="IPR000352">
    <property type="entry name" value="Pep_chain_release_fac_I"/>
</dbReference>
<dbReference type="InterPro" id="IPR045853">
    <property type="entry name" value="Pep_chain_release_fac_I_sf"/>
</dbReference>
<dbReference type="InterPro" id="IPR050057">
    <property type="entry name" value="Prokaryotic/Mito_RF"/>
</dbReference>
<dbReference type="InterPro" id="IPR004373">
    <property type="entry name" value="RF-1"/>
</dbReference>
<dbReference type="NCBIfam" id="TIGR00019">
    <property type="entry name" value="prfA"/>
    <property type="match status" value="1"/>
</dbReference>
<dbReference type="NCBIfam" id="NF001859">
    <property type="entry name" value="PRK00591.1"/>
    <property type="match status" value="1"/>
</dbReference>
<dbReference type="PANTHER" id="PTHR43804">
    <property type="entry name" value="LD18447P"/>
    <property type="match status" value="1"/>
</dbReference>
<dbReference type="PANTHER" id="PTHR43804:SF7">
    <property type="entry name" value="LD18447P"/>
    <property type="match status" value="1"/>
</dbReference>
<dbReference type="Pfam" id="PF03462">
    <property type="entry name" value="PCRF"/>
    <property type="match status" value="1"/>
</dbReference>
<dbReference type="Pfam" id="PF00472">
    <property type="entry name" value="RF-1"/>
    <property type="match status" value="1"/>
</dbReference>
<dbReference type="SMART" id="SM00937">
    <property type="entry name" value="PCRF"/>
    <property type="match status" value="1"/>
</dbReference>
<dbReference type="SUPFAM" id="SSF75620">
    <property type="entry name" value="Release factor"/>
    <property type="match status" value="1"/>
</dbReference>
<dbReference type="PROSITE" id="PS00745">
    <property type="entry name" value="RF_PROK_I"/>
    <property type="match status" value="1"/>
</dbReference>